<dbReference type="EMBL" id="AF134518">
    <property type="protein sequence ID" value="AAF78859.1"/>
    <property type="molecule type" value="Genomic_RNA"/>
</dbReference>
<dbReference type="RefSeq" id="NP_694479.1">
    <property type="nucleotide sequence ID" value="NC_004221.1"/>
</dbReference>
<dbReference type="SMR" id="Q9INI1"/>
<dbReference type="KEGG" id="vg:995352"/>
<dbReference type="Proteomes" id="UP000000832">
    <property type="component" value="Genome"/>
</dbReference>
<dbReference type="InterPro" id="IPR009982">
    <property type="entry name" value="Seadorna_VP6"/>
</dbReference>
<dbReference type="Pfam" id="PF07407">
    <property type="entry name" value="Seadorna_VP6"/>
    <property type="match status" value="1"/>
</dbReference>
<keyword id="KW-0175">Coiled coil</keyword>
<keyword id="KW-1185">Reference proteome</keyword>
<protein>
    <recommendedName>
        <fullName>Non-structural protein 2</fullName>
        <shortName>NS2</shortName>
    </recommendedName>
    <alternativeName>
        <fullName>VP6</fullName>
    </alternativeName>
</protein>
<evidence type="ECO:0000255" key="1"/>
<name>NS2_BANNV</name>
<proteinExistence type="predicted"/>
<reference key="1">
    <citation type="journal article" date="2000" name="J. Gen. Virol.">
        <title>Complete sequence determination and genetic analysis of Banna virus and Kadipiro virus: proposal for assignment to a new genus (Seadornavirus) within the family Reoviridae.</title>
        <authorList>
            <person name="Attoui H."/>
            <person name="Billoir F."/>
            <person name="Biagini P."/>
            <person name="de Micco P."/>
            <person name="de Lamballerie X."/>
        </authorList>
    </citation>
    <scope>NUCLEOTIDE SEQUENCE [GENOMIC RNA]</scope>
    <source>
        <strain>JKT-6423</strain>
    </source>
</reference>
<feature type="chain" id="PRO_0000404235" description="Non-structural protein 2">
    <location>
        <begin position="1"/>
        <end position="425"/>
    </location>
</feature>
<feature type="coiled-coil region" evidence="1">
    <location>
        <begin position="29"/>
        <end position="64"/>
    </location>
</feature>
<organism>
    <name type="scientific">Banna virus</name>
    <name type="common">BAV</name>
    <dbReference type="NCBI Taxonomy" id="77763"/>
    <lineage>
        <taxon>Viruses</taxon>
        <taxon>Riboviria</taxon>
        <taxon>Orthornavirae</taxon>
        <taxon>Duplornaviricota</taxon>
        <taxon>Resentoviricetes</taxon>
        <taxon>Reovirales</taxon>
        <taxon>Sedoreoviridae</taxon>
        <taxon>Seadornavirus</taxon>
        <taxon>Seadornavirus bannaense</taxon>
    </lineage>
</organism>
<accession>Q9INI1</accession>
<sequence>MMIALIQMKNMKCTLKVEETTENQELEGVSFDELVALREENAKLKQENEALKAKLHRLESDWTTSDIVEKVELMDAQFDRIGKIMDKMREPMLFKRDEIELHGDLLARVEGLLRIKNERSEIEFEKDIQCIVGRCFSDENKQRNLEKMIKSFEYDDIADTIALRLTHFIQDPGLRSIVYAMCKAAVLNQNYLNIEVQEIVDVTRQKYTHNARDDIDFYPMFTFDANVPEGVFDHIYKKHYLSPQSAALVHTLSHLDVNVDGNGIAMYHIGSATRFAECSVVYVDGRAYKPIRVMAEYAIFPTLPHEYKGRVEGLLLLHGGLAPITLVRVYHDVNVGGLVTGSIAASVSTLLRNCMLYSFDIYFTPNGVCINAVGNNNFVNIIDINCCGRAFGKAPLDQGSWNRNKFMGHKHGRGSKCKQYKKINS</sequence>
<gene>
    <name type="primary">Segment-6</name>
    <name type="synonym">S6</name>
</gene>